<name>HIS81_RALN1</name>
<organism>
    <name type="scientific">Ralstonia nicotianae (strain ATCC BAA-1114 / GMI1000)</name>
    <name type="common">Ralstonia solanacearum</name>
    <dbReference type="NCBI Taxonomy" id="267608"/>
    <lineage>
        <taxon>Bacteria</taxon>
        <taxon>Pseudomonadati</taxon>
        <taxon>Pseudomonadota</taxon>
        <taxon>Betaproteobacteria</taxon>
        <taxon>Burkholderiales</taxon>
        <taxon>Burkholderiaceae</taxon>
        <taxon>Ralstonia</taxon>
        <taxon>Ralstonia solanacearum species complex</taxon>
    </lineage>
</organism>
<accession>Q8XV80</accession>
<reference key="1">
    <citation type="journal article" date="2002" name="Nature">
        <title>Genome sequence of the plant pathogen Ralstonia solanacearum.</title>
        <authorList>
            <person name="Salanoubat M."/>
            <person name="Genin S."/>
            <person name="Artiguenave F."/>
            <person name="Gouzy J."/>
            <person name="Mangenot S."/>
            <person name="Arlat M."/>
            <person name="Billault A."/>
            <person name="Brottier P."/>
            <person name="Camus J.-C."/>
            <person name="Cattolico L."/>
            <person name="Chandler M."/>
            <person name="Choisne N."/>
            <person name="Claudel-Renard C."/>
            <person name="Cunnac S."/>
            <person name="Demange N."/>
            <person name="Gaspin C."/>
            <person name="Lavie M."/>
            <person name="Moisan A."/>
            <person name="Robert C."/>
            <person name="Saurin W."/>
            <person name="Schiex T."/>
            <person name="Siguier P."/>
            <person name="Thebault P."/>
            <person name="Whalen M."/>
            <person name="Wincker P."/>
            <person name="Levy M."/>
            <person name="Weissenbach J."/>
            <person name="Boucher C.A."/>
        </authorList>
    </citation>
    <scope>NUCLEOTIDE SEQUENCE [LARGE SCALE GENOMIC DNA]</scope>
    <source>
        <strain>ATCC BAA-1114 / GMI1000</strain>
    </source>
</reference>
<dbReference type="EC" id="2.6.1.9"/>
<dbReference type="EMBL" id="AL646052">
    <property type="protein sequence ID" value="CAD16658.1"/>
    <property type="molecule type" value="Genomic_DNA"/>
</dbReference>
<dbReference type="SMR" id="Q8XV80"/>
<dbReference type="STRING" id="267608.RSc2951"/>
<dbReference type="EnsemblBacteria" id="CAD16658">
    <property type="protein sequence ID" value="CAD16658"/>
    <property type="gene ID" value="RSc2951"/>
</dbReference>
<dbReference type="KEGG" id="rso:RSc2951"/>
<dbReference type="eggNOG" id="COG0079">
    <property type="taxonomic scope" value="Bacteria"/>
</dbReference>
<dbReference type="HOGENOM" id="CLU_017584_3_1_4"/>
<dbReference type="UniPathway" id="UPA00031">
    <property type="reaction ID" value="UER00012"/>
</dbReference>
<dbReference type="Proteomes" id="UP000001436">
    <property type="component" value="Chromosome"/>
</dbReference>
<dbReference type="GO" id="GO:0004400">
    <property type="term" value="F:histidinol-phosphate transaminase activity"/>
    <property type="evidence" value="ECO:0007669"/>
    <property type="project" value="UniProtKB-UniRule"/>
</dbReference>
<dbReference type="GO" id="GO:0030170">
    <property type="term" value="F:pyridoxal phosphate binding"/>
    <property type="evidence" value="ECO:0007669"/>
    <property type="project" value="InterPro"/>
</dbReference>
<dbReference type="GO" id="GO:0000105">
    <property type="term" value="P:L-histidine biosynthetic process"/>
    <property type="evidence" value="ECO:0007669"/>
    <property type="project" value="UniProtKB-UniRule"/>
</dbReference>
<dbReference type="CDD" id="cd00609">
    <property type="entry name" value="AAT_like"/>
    <property type="match status" value="1"/>
</dbReference>
<dbReference type="Gene3D" id="3.90.1150.10">
    <property type="entry name" value="Aspartate Aminotransferase, domain 1"/>
    <property type="match status" value="1"/>
</dbReference>
<dbReference type="Gene3D" id="3.40.640.10">
    <property type="entry name" value="Type I PLP-dependent aspartate aminotransferase-like (Major domain)"/>
    <property type="match status" value="1"/>
</dbReference>
<dbReference type="HAMAP" id="MF_01023">
    <property type="entry name" value="HisC_aminotrans_2"/>
    <property type="match status" value="1"/>
</dbReference>
<dbReference type="InterPro" id="IPR004839">
    <property type="entry name" value="Aminotransferase_I/II_large"/>
</dbReference>
<dbReference type="InterPro" id="IPR005861">
    <property type="entry name" value="HisP_aminotrans"/>
</dbReference>
<dbReference type="InterPro" id="IPR015424">
    <property type="entry name" value="PyrdxlP-dep_Trfase"/>
</dbReference>
<dbReference type="InterPro" id="IPR015421">
    <property type="entry name" value="PyrdxlP-dep_Trfase_major"/>
</dbReference>
<dbReference type="InterPro" id="IPR015422">
    <property type="entry name" value="PyrdxlP-dep_Trfase_small"/>
</dbReference>
<dbReference type="NCBIfam" id="TIGR01141">
    <property type="entry name" value="hisC"/>
    <property type="match status" value="1"/>
</dbReference>
<dbReference type="PANTHER" id="PTHR42885:SF2">
    <property type="entry name" value="HISTIDINOL-PHOSPHATE AMINOTRANSFERASE"/>
    <property type="match status" value="1"/>
</dbReference>
<dbReference type="PANTHER" id="PTHR42885">
    <property type="entry name" value="HISTIDINOL-PHOSPHATE AMINOTRANSFERASE-RELATED"/>
    <property type="match status" value="1"/>
</dbReference>
<dbReference type="Pfam" id="PF00155">
    <property type="entry name" value="Aminotran_1_2"/>
    <property type="match status" value="1"/>
</dbReference>
<dbReference type="SUPFAM" id="SSF53383">
    <property type="entry name" value="PLP-dependent transferases"/>
    <property type="match status" value="1"/>
</dbReference>
<gene>
    <name type="primary">hisC1</name>
    <name type="ordered locus">RSc2951</name>
    <name type="ORF">RS00135</name>
</gene>
<feature type="chain" id="PRO_0000153430" description="Histidinol-phosphate aminotransferase 1">
    <location>
        <begin position="1"/>
        <end position="374"/>
    </location>
</feature>
<feature type="modified residue" description="N6-(pyridoxal phosphate)lysine" evidence="1">
    <location>
        <position position="232"/>
    </location>
</feature>
<evidence type="ECO:0000250" key="1"/>
<evidence type="ECO:0000305" key="2"/>
<protein>
    <recommendedName>
        <fullName>Histidinol-phosphate aminotransferase 1</fullName>
        <ecNumber>2.6.1.9</ecNumber>
    </recommendedName>
    <alternativeName>
        <fullName>Imidazole acetol-phosphate transaminase 1</fullName>
    </alternativeName>
</protein>
<proteinExistence type="inferred from homology"/>
<comment type="catalytic activity">
    <reaction>
        <text>L-histidinol phosphate + 2-oxoglutarate = 3-(imidazol-4-yl)-2-oxopropyl phosphate + L-glutamate</text>
        <dbReference type="Rhea" id="RHEA:23744"/>
        <dbReference type="ChEBI" id="CHEBI:16810"/>
        <dbReference type="ChEBI" id="CHEBI:29985"/>
        <dbReference type="ChEBI" id="CHEBI:57766"/>
        <dbReference type="ChEBI" id="CHEBI:57980"/>
        <dbReference type="EC" id="2.6.1.9"/>
    </reaction>
</comment>
<comment type="cofactor">
    <cofactor evidence="1">
        <name>pyridoxal 5'-phosphate</name>
        <dbReference type="ChEBI" id="CHEBI:597326"/>
    </cofactor>
</comment>
<comment type="pathway">
    <text>Amino-acid biosynthesis; L-histidine biosynthesis; L-histidine from 5-phospho-alpha-D-ribose 1-diphosphate: step 7/9.</text>
</comment>
<comment type="subunit">
    <text evidence="1">Homodimer.</text>
</comment>
<comment type="similarity">
    <text evidence="2">Belongs to the class-II pyridoxal-phosphate-dependent aminotransferase family. Histidinol-phosphate aminotransferase subfamily.</text>
</comment>
<keyword id="KW-0028">Amino-acid biosynthesis</keyword>
<keyword id="KW-0032">Aminotransferase</keyword>
<keyword id="KW-0368">Histidine biosynthesis</keyword>
<keyword id="KW-0663">Pyridoxal phosphate</keyword>
<keyword id="KW-1185">Reference proteome</keyword>
<keyword id="KW-0808">Transferase</keyword>
<sequence>MNANAPVQPSLDDLLGRIVRDDVRAMGAYHVPDASGMVKLDAMENPYHLPAMLRDALGKRLAEVALNRYPVPTADALKAQLKRVMRVPAGADVLLGNGSDEIISLIAIAAAKPGATVLAPVPGFVMYAMSAQLMGLKFVGVPLRADLTLDREAMLAAMAEHQPAVIYLAYPNNPTGNLFDAADMDALLRAARGPVCQSLVVVDEAYQPFAQHSWMPRLPEFDHLLVMRTVSKLGLAGIRLGYVAGHPKWIAELDKVRPPYNVNVLTEATAAFVLDHVDVLDAQAATLRAERTRLIDALSAQPGVTVFPSAANFLLLRVPDAAGLFERLLKRRVLVKNVSKMHPLLANCLRVTVSNPEENAQFLDAFAASLQDTP</sequence>